<name>HLDD_ECO45</name>
<evidence type="ECO:0000255" key="1">
    <source>
        <dbReference type="HAMAP-Rule" id="MF_01601"/>
    </source>
</evidence>
<gene>
    <name evidence="1" type="primary">hldD</name>
    <name type="ordered locus">ECS88_4035</name>
</gene>
<organism>
    <name type="scientific">Escherichia coli O45:K1 (strain S88 / ExPEC)</name>
    <dbReference type="NCBI Taxonomy" id="585035"/>
    <lineage>
        <taxon>Bacteria</taxon>
        <taxon>Pseudomonadati</taxon>
        <taxon>Pseudomonadota</taxon>
        <taxon>Gammaproteobacteria</taxon>
        <taxon>Enterobacterales</taxon>
        <taxon>Enterobacteriaceae</taxon>
        <taxon>Escherichia</taxon>
    </lineage>
</organism>
<accession>B7MFI2</accession>
<protein>
    <recommendedName>
        <fullName evidence="1">ADP-L-glycero-D-manno-heptose-6-epimerase</fullName>
        <ecNumber evidence="1">5.1.3.20</ecNumber>
    </recommendedName>
    <alternativeName>
        <fullName evidence="1">ADP-L-glycero-beta-D-manno-heptose-6-epimerase</fullName>
        <shortName evidence="1">ADP-glyceromanno-heptose 6-epimerase</shortName>
        <shortName evidence="1">ADP-hep 6-epimerase</shortName>
        <shortName evidence="1">AGME</shortName>
    </alternativeName>
</protein>
<proteinExistence type="inferred from homology"/>
<feature type="chain" id="PRO_1000190404" description="ADP-L-glycero-D-manno-heptose-6-epimerase">
    <location>
        <begin position="1"/>
        <end position="310"/>
    </location>
</feature>
<feature type="active site" description="Proton acceptor" evidence="1">
    <location>
        <position position="140"/>
    </location>
</feature>
<feature type="active site" description="Proton acceptor" evidence="1">
    <location>
        <position position="178"/>
    </location>
</feature>
<feature type="binding site" evidence="1">
    <location>
        <begin position="10"/>
        <end position="11"/>
    </location>
    <ligand>
        <name>NADP(+)</name>
        <dbReference type="ChEBI" id="CHEBI:58349"/>
    </ligand>
</feature>
<feature type="binding site" evidence="1">
    <location>
        <begin position="31"/>
        <end position="32"/>
    </location>
    <ligand>
        <name>NADP(+)</name>
        <dbReference type="ChEBI" id="CHEBI:58349"/>
    </ligand>
</feature>
<feature type="binding site" evidence="1">
    <location>
        <position position="38"/>
    </location>
    <ligand>
        <name>NADP(+)</name>
        <dbReference type="ChEBI" id="CHEBI:58349"/>
    </ligand>
</feature>
<feature type="binding site" evidence="1">
    <location>
        <position position="53"/>
    </location>
    <ligand>
        <name>NADP(+)</name>
        <dbReference type="ChEBI" id="CHEBI:58349"/>
    </ligand>
</feature>
<feature type="binding site" evidence="1">
    <location>
        <begin position="75"/>
        <end position="79"/>
    </location>
    <ligand>
        <name>NADP(+)</name>
        <dbReference type="ChEBI" id="CHEBI:58349"/>
    </ligand>
</feature>
<feature type="binding site" evidence="1">
    <location>
        <position position="92"/>
    </location>
    <ligand>
        <name>NADP(+)</name>
        <dbReference type="ChEBI" id="CHEBI:58349"/>
    </ligand>
</feature>
<feature type="binding site" evidence="1">
    <location>
        <position position="144"/>
    </location>
    <ligand>
        <name>NADP(+)</name>
        <dbReference type="ChEBI" id="CHEBI:58349"/>
    </ligand>
</feature>
<feature type="binding site" evidence="1">
    <location>
        <position position="169"/>
    </location>
    <ligand>
        <name>substrate</name>
    </ligand>
</feature>
<feature type="binding site" evidence="1">
    <location>
        <position position="170"/>
    </location>
    <ligand>
        <name>NADP(+)</name>
        <dbReference type="ChEBI" id="CHEBI:58349"/>
    </ligand>
</feature>
<feature type="binding site" evidence="1">
    <location>
        <position position="178"/>
    </location>
    <ligand>
        <name>NADP(+)</name>
        <dbReference type="ChEBI" id="CHEBI:58349"/>
    </ligand>
</feature>
<feature type="binding site" evidence="1">
    <location>
        <position position="180"/>
    </location>
    <ligand>
        <name>substrate</name>
    </ligand>
</feature>
<feature type="binding site" evidence="1">
    <location>
        <position position="187"/>
    </location>
    <ligand>
        <name>substrate</name>
    </ligand>
</feature>
<feature type="binding site" evidence="1">
    <location>
        <begin position="201"/>
        <end position="204"/>
    </location>
    <ligand>
        <name>substrate</name>
    </ligand>
</feature>
<feature type="binding site" evidence="1">
    <location>
        <position position="209"/>
    </location>
    <ligand>
        <name>substrate</name>
    </ligand>
</feature>
<feature type="binding site" evidence="1">
    <location>
        <position position="272"/>
    </location>
    <ligand>
        <name>substrate</name>
    </ligand>
</feature>
<feature type="modified residue" description="N6-acetyllysine" evidence="1">
    <location>
        <position position="267"/>
    </location>
</feature>
<reference key="1">
    <citation type="journal article" date="2009" name="PLoS Genet.">
        <title>Organised genome dynamics in the Escherichia coli species results in highly diverse adaptive paths.</title>
        <authorList>
            <person name="Touchon M."/>
            <person name="Hoede C."/>
            <person name="Tenaillon O."/>
            <person name="Barbe V."/>
            <person name="Baeriswyl S."/>
            <person name="Bidet P."/>
            <person name="Bingen E."/>
            <person name="Bonacorsi S."/>
            <person name="Bouchier C."/>
            <person name="Bouvet O."/>
            <person name="Calteau A."/>
            <person name="Chiapello H."/>
            <person name="Clermont O."/>
            <person name="Cruveiller S."/>
            <person name="Danchin A."/>
            <person name="Diard M."/>
            <person name="Dossat C."/>
            <person name="Karoui M.E."/>
            <person name="Frapy E."/>
            <person name="Garry L."/>
            <person name="Ghigo J.M."/>
            <person name="Gilles A.M."/>
            <person name="Johnson J."/>
            <person name="Le Bouguenec C."/>
            <person name="Lescat M."/>
            <person name="Mangenot S."/>
            <person name="Martinez-Jehanne V."/>
            <person name="Matic I."/>
            <person name="Nassif X."/>
            <person name="Oztas S."/>
            <person name="Petit M.A."/>
            <person name="Pichon C."/>
            <person name="Rouy Z."/>
            <person name="Ruf C.S."/>
            <person name="Schneider D."/>
            <person name="Tourret J."/>
            <person name="Vacherie B."/>
            <person name="Vallenet D."/>
            <person name="Medigue C."/>
            <person name="Rocha E.P.C."/>
            <person name="Denamur E."/>
        </authorList>
    </citation>
    <scope>NUCLEOTIDE SEQUENCE [LARGE SCALE GENOMIC DNA]</scope>
    <source>
        <strain>S88 / ExPEC</strain>
    </source>
</reference>
<comment type="function">
    <text evidence="1">Catalyzes the interconversion between ADP-D-glycero-beta-D-manno-heptose and ADP-L-glycero-beta-D-manno-heptose via an epimerization at carbon 6 of the heptose.</text>
</comment>
<comment type="catalytic activity">
    <reaction evidence="1">
        <text>ADP-D-glycero-beta-D-manno-heptose = ADP-L-glycero-beta-D-manno-heptose</text>
        <dbReference type="Rhea" id="RHEA:17577"/>
        <dbReference type="ChEBI" id="CHEBI:59967"/>
        <dbReference type="ChEBI" id="CHEBI:61506"/>
        <dbReference type="EC" id="5.1.3.20"/>
    </reaction>
</comment>
<comment type="cofactor">
    <cofactor evidence="1">
        <name>NADP(+)</name>
        <dbReference type="ChEBI" id="CHEBI:58349"/>
    </cofactor>
    <text evidence="1">Binds 1 NADP(+) per subunit.</text>
</comment>
<comment type="pathway">
    <text evidence="1">Nucleotide-sugar biosynthesis; ADP-L-glycero-beta-D-manno-heptose biosynthesis; ADP-L-glycero-beta-D-manno-heptose from D-glycero-beta-D-manno-heptose 7-phosphate: step 4/4.</text>
</comment>
<comment type="subunit">
    <text evidence="1">Homopentamer.</text>
</comment>
<comment type="domain">
    <text evidence="1">Contains a large N-terminal NADP-binding domain, and a smaller C-terminal substrate-binding domain.</text>
</comment>
<comment type="similarity">
    <text evidence="1">Belongs to the NAD(P)-dependent epimerase/dehydratase family. HldD subfamily.</text>
</comment>
<sequence length="310" mass="34894">MIIVTGGAGFIGSNIVKALNDKGITDILVVDNLKDGTKFVNLVDLDIADYMDKEDFLIQIMAGEEFGDVEAIFHEGACSSTTEWDGKYMMDNNYQYSKELLHYCLEREIPFLYASSAATYGGRTSDFIESREYEKPLNVYGYSKFLFDEYVRQILPEANSQIVGFRYFNVYGPREGHKGSMASVAFHLNTQLNNGESPKLFEGSENFKRDFVYVGDVADVNLWFLENGVSGIFNLGTGRAESFQAVADATLAYHKKGQIEYIPFPDKLKGRYQAFTQADLTNLRAAGYDKPFKTVAEGVTEYMAWLNRDA</sequence>
<keyword id="KW-0007">Acetylation</keyword>
<keyword id="KW-0119">Carbohydrate metabolism</keyword>
<keyword id="KW-0413">Isomerase</keyword>
<keyword id="KW-0521">NADP</keyword>
<keyword id="KW-1185">Reference proteome</keyword>
<dbReference type="EC" id="5.1.3.20" evidence="1"/>
<dbReference type="EMBL" id="CU928161">
    <property type="protein sequence ID" value="CAR05244.1"/>
    <property type="molecule type" value="Genomic_DNA"/>
</dbReference>
<dbReference type="SMR" id="B7MFI2"/>
<dbReference type="KEGG" id="ecz:ECS88_4035"/>
<dbReference type="HOGENOM" id="CLU_007383_1_3_6"/>
<dbReference type="UniPathway" id="UPA00356">
    <property type="reaction ID" value="UER00440"/>
</dbReference>
<dbReference type="Proteomes" id="UP000000747">
    <property type="component" value="Chromosome"/>
</dbReference>
<dbReference type="GO" id="GO:0008712">
    <property type="term" value="F:ADP-glyceromanno-heptose 6-epimerase activity"/>
    <property type="evidence" value="ECO:0007669"/>
    <property type="project" value="UniProtKB-UniRule"/>
</dbReference>
<dbReference type="GO" id="GO:0050661">
    <property type="term" value="F:NADP binding"/>
    <property type="evidence" value="ECO:0007669"/>
    <property type="project" value="InterPro"/>
</dbReference>
<dbReference type="GO" id="GO:0097171">
    <property type="term" value="P:ADP-L-glycero-beta-D-manno-heptose biosynthetic process"/>
    <property type="evidence" value="ECO:0007669"/>
    <property type="project" value="UniProtKB-UniPathway"/>
</dbReference>
<dbReference type="GO" id="GO:0005975">
    <property type="term" value="P:carbohydrate metabolic process"/>
    <property type="evidence" value="ECO:0007669"/>
    <property type="project" value="UniProtKB-UniRule"/>
</dbReference>
<dbReference type="CDD" id="cd05248">
    <property type="entry name" value="ADP_GME_SDR_e"/>
    <property type="match status" value="1"/>
</dbReference>
<dbReference type="Gene3D" id="3.40.50.720">
    <property type="entry name" value="NAD(P)-binding Rossmann-like Domain"/>
    <property type="match status" value="1"/>
</dbReference>
<dbReference type="Gene3D" id="3.90.25.10">
    <property type="entry name" value="UDP-galactose 4-epimerase, domain 1"/>
    <property type="match status" value="1"/>
</dbReference>
<dbReference type="HAMAP" id="MF_01601">
    <property type="entry name" value="Heptose_epimerase"/>
    <property type="match status" value="1"/>
</dbReference>
<dbReference type="InterPro" id="IPR001509">
    <property type="entry name" value="Epimerase_deHydtase"/>
</dbReference>
<dbReference type="InterPro" id="IPR011912">
    <property type="entry name" value="Heptose_epim"/>
</dbReference>
<dbReference type="InterPro" id="IPR036291">
    <property type="entry name" value="NAD(P)-bd_dom_sf"/>
</dbReference>
<dbReference type="NCBIfam" id="TIGR02197">
    <property type="entry name" value="heptose_epim"/>
    <property type="match status" value="1"/>
</dbReference>
<dbReference type="NCBIfam" id="NF008360">
    <property type="entry name" value="PRK11150.1"/>
    <property type="match status" value="1"/>
</dbReference>
<dbReference type="PANTHER" id="PTHR43103:SF3">
    <property type="entry name" value="ADP-L-GLYCERO-D-MANNO-HEPTOSE-6-EPIMERASE"/>
    <property type="match status" value="1"/>
</dbReference>
<dbReference type="PANTHER" id="PTHR43103">
    <property type="entry name" value="NUCLEOSIDE-DIPHOSPHATE-SUGAR EPIMERASE"/>
    <property type="match status" value="1"/>
</dbReference>
<dbReference type="Pfam" id="PF01370">
    <property type="entry name" value="Epimerase"/>
    <property type="match status" value="1"/>
</dbReference>
<dbReference type="SUPFAM" id="SSF51735">
    <property type="entry name" value="NAD(P)-binding Rossmann-fold domains"/>
    <property type="match status" value="1"/>
</dbReference>